<comment type="function">
    <text evidence="2">Together with PE9, induces macrophage apoptosis through human Toll-like receptor 4 (TLR4) signaling pathway. Interaction with TLR4 leads to increased levels of phospho-IRF-3, increase in the transcript levels of IFN-beta and pro-apoptotic genes, up-regulation of IL-10, down-regulation of IL-1b and enhanced levels of macrophage apoptosis.</text>
</comment>
<comment type="subunit">
    <text evidence="2">Forms a complex with PE9. The complex interacts with human TLR4.</text>
</comment>
<comment type="subcellular location">
    <subcellularLocation>
        <location evidence="2">Secreted</location>
        <location evidence="2">Cell wall</location>
    </subcellularLocation>
    <text evidence="2">Requires PE9 for cell wall localization.</text>
</comment>
<comment type="domain">
    <text evidence="2">The C-terminal domain is required for interaction with TLR4 but not with PE9.</text>
</comment>
<comment type="similarity">
    <text evidence="3">Belongs to the mycobacterial PE family.</text>
</comment>
<comment type="caution">
    <text evidence="2 5">Partial ORF that appears to be frameshifted continuation of Rv1088 (PE9). Sequence has been checked and appears correct. PE9 and PE10 are expressed independently of each other (PubMed:26031846).</text>
</comment>
<sequence>SFAGAEAANASQLQSIARQVRGAVNAVAGQVTGNGGSGNSGTSAAAANPNSDNTASIADRGTSAIMTTASATASSTGVDGGIAATYAVASQWDGGYVANYTITQFGRDFDDRLAVAIHFA</sequence>
<protein>
    <recommendedName>
        <fullName evidence="3">PE family protein PE10</fullName>
    </recommendedName>
</protein>
<name>PE10_MYCTU</name>
<feature type="chain" id="PRO_0000438136" description="PE family protein PE10">
    <location>
        <begin position="1" status="less than"/>
        <end position="120"/>
    </location>
</feature>
<feature type="region of interest" description="Disordered" evidence="1">
    <location>
        <begin position="29"/>
        <end position="59"/>
    </location>
</feature>
<feature type="compositionally biased region" description="Low complexity" evidence="1">
    <location>
        <begin position="40"/>
        <end position="51"/>
    </location>
</feature>
<feature type="non-terminal residue" evidence="4">
    <location>
        <position position="1"/>
    </location>
</feature>
<accession>L0T5T4</accession>
<keyword id="KW-0134">Cell wall</keyword>
<keyword id="KW-1185">Reference proteome</keyword>
<keyword id="KW-0964">Secreted</keyword>
<keyword id="KW-0843">Virulence</keyword>
<dbReference type="EMBL" id="AL123456">
    <property type="protein sequence ID" value="CCP43841.1"/>
    <property type="molecule type" value="Genomic_DNA"/>
</dbReference>
<dbReference type="STRING" id="83332.Rv1089"/>
<dbReference type="PaxDb" id="83332-Rv1089"/>
<dbReference type="TubercuList" id="Rv1089"/>
<dbReference type="InParanoid" id="L0T5T4"/>
<dbReference type="Proteomes" id="UP000001584">
    <property type="component" value="Chromosome"/>
</dbReference>
<dbReference type="GO" id="GO:0005576">
    <property type="term" value="C:extracellular region"/>
    <property type="evidence" value="ECO:0007669"/>
    <property type="project" value="UniProtKB-KW"/>
</dbReference>
<evidence type="ECO:0000256" key="1">
    <source>
        <dbReference type="SAM" id="MobiDB-lite"/>
    </source>
</evidence>
<evidence type="ECO:0000269" key="2">
    <source>
    </source>
</evidence>
<evidence type="ECO:0000305" key="3"/>
<evidence type="ECO:0000312" key="4">
    <source>
        <dbReference type="EMBL" id="CCP43841.1"/>
    </source>
</evidence>
<evidence type="ECO:0000312" key="5">
    <source>
        <dbReference type="TubercuList" id="Rv1089"/>
    </source>
</evidence>
<proteinExistence type="evidence at protein level"/>
<organism>
    <name type="scientific">Mycobacterium tuberculosis (strain ATCC 25618 / H37Rv)</name>
    <dbReference type="NCBI Taxonomy" id="83332"/>
    <lineage>
        <taxon>Bacteria</taxon>
        <taxon>Bacillati</taxon>
        <taxon>Actinomycetota</taxon>
        <taxon>Actinomycetes</taxon>
        <taxon>Mycobacteriales</taxon>
        <taxon>Mycobacteriaceae</taxon>
        <taxon>Mycobacterium</taxon>
        <taxon>Mycobacterium tuberculosis complex</taxon>
    </lineage>
</organism>
<gene>
    <name evidence="4" type="primary">PE10</name>
    <name evidence="4" type="ordered locus">Rv1089</name>
</gene>
<reference key="1">
    <citation type="journal article" date="1998" name="Nature">
        <title>Deciphering the biology of Mycobacterium tuberculosis from the complete genome sequence.</title>
        <authorList>
            <person name="Cole S.T."/>
            <person name="Brosch R."/>
            <person name="Parkhill J."/>
            <person name="Garnier T."/>
            <person name="Churcher C.M."/>
            <person name="Harris D.E."/>
            <person name="Gordon S.V."/>
            <person name="Eiglmeier K."/>
            <person name="Gas S."/>
            <person name="Barry C.E. III"/>
            <person name="Tekaia F."/>
            <person name="Badcock K."/>
            <person name="Basham D."/>
            <person name="Brown D."/>
            <person name="Chillingworth T."/>
            <person name="Connor R."/>
            <person name="Davies R.M."/>
            <person name="Devlin K."/>
            <person name="Feltwell T."/>
            <person name="Gentles S."/>
            <person name="Hamlin N."/>
            <person name="Holroyd S."/>
            <person name="Hornsby T."/>
            <person name="Jagels K."/>
            <person name="Krogh A."/>
            <person name="McLean J."/>
            <person name="Moule S."/>
            <person name="Murphy L.D."/>
            <person name="Oliver S."/>
            <person name="Osborne J."/>
            <person name="Quail M.A."/>
            <person name="Rajandream M.A."/>
            <person name="Rogers J."/>
            <person name="Rutter S."/>
            <person name="Seeger K."/>
            <person name="Skelton S."/>
            <person name="Squares S."/>
            <person name="Squares R."/>
            <person name="Sulston J.E."/>
            <person name="Taylor K."/>
            <person name="Whitehead S."/>
            <person name="Barrell B.G."/>
        </authorList>
    </citation>
    <scope>NUCLEOTIDE SEQUENCE [LARGE SCALE GENOMIC DNA]</scope>
    <source>
        <strain>ATCC 25618 / H37Rv</strain>
    </source>
</reference>
<reference key="2">
    <citation type="journal article" date="2015" name="Cell. Microbiol.">
        <title>The Mycobacterium tuberculosis protein pair PE9 (Rv1088)-PE10 (Rv1089) forms heterodimers and induces macrophage apoptosis through Toll-like receptor 4.</title>
        <authorList>
            <person name="Tiwari B."/>
            <person name="Ramakrishnan U.M."/>
            <person name="Raghunand T.R."/>
        </authorList>
    </citation>
    <scope>FUNCTION</scope>
    <scope>INTERACTION WITH PE9 AND TLR4</scope>
    <scope>SUBCELLULAR LOCATION</scope>
    <scope>DOMAIN</scope>
</reference>